<organism>
    <name type="scientific">Oryza sativa subsp. japonica</name>
    <name type="common">Rice</name>
    <dbReference type="NCBI Taxonomy" id="39947"/>
    <lineage>
        <taxon>Eukaryota</taxon>
        <taxon>Viridiplantae</taxon>
        <taxon>Streptophyta</taxon>
        <taxon>Embryophyta</taxon>
        <taxon>Tracheophyta</taxon>
        <taxon>Spermatophyta</taxon>
        <taxon>Magnoliopsida</taxon>
        <taxon>Liliopsida</taxon>
        <taxon>Poales</taxon>
        <taxon>Poaceae</taxon>
        <taxon>BOP clade</taxon>
        <taxon>Oryzoideae</taxon>
        <taxon>Oryzeae</taxon>
        <taxon>Oryzinae</taxon>
        <taxon>Oryza</taxon>
        <taxon>Oryza sativa</taxon>
    </lineage>
</organism>
<protein>
    <recommendedName>
        <fullName>Tubby-like F-box protein 5</fullName>
        <shortName>OsTLP5</shortName>
    </recommendedName>
    <alternativeName>
        <fullName>Tubby-like F-box protein 8</fullName>
        <shortName>OsTLP8</shortName>
    </alternativeName>
</protein>
<accession>Q6Z2G9</accession>
<accession>A0A0P0VNM9</accession>
<accession>B7EA45</accession>
<dbReference type="EMBL" id="AP005323">
    <property type="protein sequence ID" value="BAD08037.1"/>
    <property type="molecule type" value="Genomic_DNA"/>
</dbReference>
<dbReference type="EMBL" id="AP008208">
    <property type="protein sequence ID" value="BAF09780.2"/>
    <property type="status" value="ALT_SEQ"/>
    <property type="molecule type" value="Genomic_DNA"/>
</dbReference>
<dbReference type="EMBL" id="AP014958">
    <property type="protein sequence ID" value="BAS80512.1"/>
    <property type="molecule type" value="Genomic_DNA"/>
</dbReference>
<dbReference type="EMBL" id="CM000139">
    <property type="status" value="NOT_ANNOTATED_CDS"/>
    <property type="molecule type" value="Genomic_DNA"/>
</dbReference>
<dbReference type="EMBL" id="AK064855">
    <property type="protein sequence ID" value="BAG89242.1"/>
    <property type="molecule type" value="mRNA"/>
</dbReference>
<dbReference type="RefSeq" id="XP_015627455.1">
    <property type="nucleotide sequence ID" value="XM_015771969.1"/>
</dbReference>
<dbReference type="FunCoup" id="Q6Z2G9">
    <property type="interactions" value="1394"/>
</dbReference>
<dbReference type="STRING" id="39947.Q6Z2G9"/>
<dbReference type="PaxDb" id="39947-Q6Z2G9"/>
<dbReference type="EnsemblPlants" id="Os02t0705300-01">
    <property type="protein sequence ID" value="Os02t0705300-01"/>
    <property type="gene ID" value="Os02g0705300"/>
</dbReference>
<dbReference type="Gramene" id="Os02t0705300-01">
    <property type="protein sequence ID" value="Os02t0705300-01"/>
    <property type="gene ID" value="Os02g0705300"/>
</dbReference>
<dbReference type="KEGG" id="dosa:Os02g0705300"/>
<dbReference type="eggNOG" id="KOG2502">
    <property type="taxonomic scope" value="Eukaryota"/>
</dbReference>
<dbReference type="HOGENOM" id="CLU_028236_3_0_1"/>
<dbReference type="InParanoid" id="Q6Z2G9"/>
<dbReference type="OMA" id="CTMNSIS"/>
<dbReference type="OrthoDB" id="8775810at2759"/>
<dbReference type="Proteomes" id="UP000000763">
    <property type="component" value="Chromosome 2"/>
</dbReference>
<dbReference type="Proteomes" id="UP000007752">
    <property type="component" value="Chromosome 2"/>
</dbReference>
<dbReference type="Proteomes" id="UP000059680">
    <property type="component" value="Chromosome 2"/>
</dbReference>
<dbReference type="ExpressionAtlas" id="Q6Z2G9">
    <property type="expression patterns" value="baseline and differential"/>
</dbReference>
<dbReference type="CDD" id="cd22153">
    <property type="entry name" value="F-box_AtTLP-like"/>
    <property type="match status" value="1"/>
</dbReference>
<dbReference type="Gene3D" id="1.20.1280.50">
    <property type="match status" value="1"/>
</dbReference>
<dbReference type="Gene3D" id="3.20.90.10">
    <property type="entry name" value="Tubby Protein, Chain A"/>
    <property type="match status" value="1"/>
</dbReference>
<dbReference type="InterPro" id="IPR036047">
    <property type="entry name" value="F-box-like_dom_sf"/>
</dbReference>
<dbReference type="InterPro" id="IPR001810">
    <property type="entry name" value="F-box_dom"/>
</dbReference>
<dbReference type="InterPro" id="IPR025659">
    <property type="entry name" value="Tubby-like_C"/>
</dbReference>
<dbReference type="InterPro" id="IPR000007">
    <property type="entry name" value="Tubby_C"/>
</dbReference>
<dbReference type="InterPro" id="IPR018066">
    <property type="entry name" value="Tubby_C_CS"/>
</dbReference>
<dbReference type="PANTHER" id="PTHR16517:SF104">
    <property type="entry name" value="TUBBY-LIKE F-BOX PROTEIN 6"/>
    <property type="match status" value="1"/>
</dbReference>
<dbReference type="PANTHER" id="PTHR16517">
    <property type="entry name" value="TUBBY-RELATED"/>
    <property type="match status" value="1"/>
</dbReference>
<dbReference type="Pfam" id="PF12937">
    <property type="entry name" value="F-box-like"/>
    <property type="match status" value="1"/>
</dbReference>
<dbReference type="Pfam" id="PF01167">
    <property type="entry name" value="Tub"/>
    <property type="match status" value="1"/>
</dbReference>
<dbReference type="PRINTS" id="PR01573">
    <property type="entry name" value="SUPERTUBBY"/>
</dbReference>
<dbReference type="SUPFAM" id="SSF81383">
    <property type="entry name" value="F-box domain"/>
    <property type="match status" value="1"/>
</dbReference>
<dbReference type="SUPFAM" id="SSF54518">
    <property type="entry name" value="Tubby C-terminal domain-like"/>
    <property type="match status" value="1"/>
</dbReference>
<dbReference type="PROSITE" id="PS01200">
    <property type="entry name" value="TUB_1"/>
    <property type="match status" value="1"/>
</dbReference>
<dbReference type="PROSITE" id="PS01201">
    <property type="entry name" value="TUB_2"/>
    <property type="match status" value="1"/>
</dbReference>
<sequence>MSLKSIVRELREMRDGIGSMSRRAADGRAGGGRGGSRHSWPVLWSEQQQPPQQQQLQRQEHQQQQGRWANLPPELLLDVIQRVEASEATWPARRQVVACAAVCRSWREVTKEVVKTLEECGRITFPISLKQPGPREHPVQCFVRRDRATSTYLLYLGLSPSLHGENDKLLLAARKIRRATRTSFVISLVSNDFSLSSSTYVGKLKPNFLGTKFTIFDSQPPCDAVVLPNNRPSKRHFKQVSPRLPLGNYNVATVSYELTVLRNRGPRRMQCTMHSIPALCIQEGGKAPTPTGIIHSLDEQVPALSTSKGKEPAIEFSSTSLSADLSGPVCTNEVPLVLKNKAPRWHEQLQCWCLNFRGRVTVASVKNFQLVASVDPSLGIPAAEQEKVILQFGKIGKDIFTMDYRYPLSAFQAFAICLTSFDTKPACE</sequence>
<proteinExistence type="evidence at transcript level"/>
<comment type="tissue specificity">
    <text evidence="2">Ubiquitous.</text>
</comment>
<comment type="similarity">
    <text evidence="3">Belongs to the TUB family.</text>
</comment>
<comment type="sequence caution" evidence="3">
    <conflict type="erroneous gene model prediction">
        <sequence resource="EMBL-CDS" id="BAF09780"/>
    </conflict>
</comment>
<gene>
    <name type="primary">TULP5</name>
    <name type="synonym">TULP8</name>
    <name type="ordered locus">Os02g0705300</name>
    <name type="ordered locus">LOC_Os02g47640</name>
    <name type="ORF">OsJ_007813</name>
    <name type="ORF">P0680A05.6-1</name>
</gene>
<keyword id="KW-1185">Reference proteome</keyword>
<reference key="1">
    <citation type="journal article" date="2005" name="Nature">
        <title>The map-based sequence of the rice genome.</title>
        <authorList>
            <consortium name="International rice genome sequencing project (IRGSP)"/>
        </authorList>
    </citation>
    <scope>NUCLEOTIDE SEQUENCE [LARGE SCALE GENOMIC DNA]</scope>
    <source>
        <strain>cv. Nipponbare</strain>
    </source>
</reference>
<reference key="2">
    <citation type="journal article" date="2008" name="Nucleic Acids Res.">
        <title>The rice annotation project database (RAP-DB): 2008 update.</title>
        <authorList>
            <consortium name="The rice annotation project (RAP)"/>
        </authorList>
    </citation>
    <scope>GENOME REANNOTATION</scope>
    <source>
        <strain>cv. Nipponbare</strain>
    </source>
</reference>
<reference key="3">
    <citation type="journal article" date="2013" name="Rice">
        <title>Improvement of the Oryza sativa Nipponbare reference genome using next generation sequence and optical map data.</title>
        <authorList>
            <person name="Kawahara Y."/>
            <person name="de la Bastide M."/>
            <person name="Hamilton J.P."/>
            <person name="Kanamori H."/>
            <person name="McCombie W.R."/>
            <person name="Ouyang S."/>
            <person name="Schwartz D.C."/>
            <person name="Tanaka T."/>
            <person name="Wu J."/>
            <person name="Zhou S."/>
            <person name="Childs K.L."/>
            <person name="Davidson R.M."/>
            <person name="Lin H."/>
            <person name="Quesada-Ocampo L."/>
            <person name="Vaillancourt B."/>
            <person name="Sakai H."/>
            <person name="Lee S.S."/>
            <person name="Kim J."/>
            <person name="Numa H."/>
            <person name="Itoh T."/>
            <person name="Buell C.R."/>
            <person name="Matsumoto T."/>
        </authorList>
    </citation>
    <scope>GENOME REANNOTATION</scope>
    <source>
        <strain>cv. Nipponbare</strain>
    </source>
</reference>
<reference key="4">
    <citation type="journal article" date="2005" name="PLoS Biol.">
        <title>The genomes of Oryza sativa: a history of duplications.</title>
        <authorList>
            <person name="Yu J."/>
            <person name="Wang J."/>
            <person name="Lin W."/>
            <person name="Li S."/>
            <person name="Li H."/>
            <person name="Zhou J."/>
            <person name="Ni P."/>
            <person name="Dong W."/>
            <person name="Hu S."/>
            <person name="Zeng C."/>
            <person name="Zhang J."/>
            <person name="Zhang Y."/>
            <person name="Li R."/>
            <person name="Xu Z."/>
            <person name="Li S."/>
            <person name="Li X."/>
            <person name="Zheng H."/>
            <person name="Cong L."/>
            <person name="Lin L."/>
            <person name="Yin J."/>
            <person name="Geng J."/>
            <person name="Li G."/>
            <person name="Shi J."/>
            <person name="Liu J."/>
            <person name="Lv H."/>
            <person name="Li J."/>
            <person name="Wang J."/>
            <person name="Deng Y."/>
            <person name="Ran L."/>
            <person name="Shi X."/>
            <person name="Wang X."/>
            <person name="Wu Q."/>
            <person name="Li C."/>
            <person name="Ren X."/>
            <person name="Wang J."/>
            <person name="Wang X."/>
            <person name="Li D."/>
            <person name="Liu D."/>
            <person name="Zhang X."/>
            <person name="Ji Z."/>
            <person name="Zhao W."/>
            <person name="Sun Y."/>
            <person name="Zhang Z."/>
            <person name="Bao J."/>
            <person name="Han Y."/>
            <person name="Dong L."/>
            <person name="Ji J."/>
            <person name="Chen P."/>
            <person name="Wu S."/>
            <person name="Liu J."/>
            <person name="Xiao Y."/>
            <person name="Bu D."/>
            <person name="Tan J."/>
            <person name="Yang L."/>
            <person name="Ye C."/>
            <person name="Zhang J."/>
            <person name="Xu J."/>
            <person name="Zhou Y."/>
            <person name="Yu Y."/>
            <person name="Zhang B."/>
            <person name="Zhuang S."/>
            <person name="Wei H."/>
            <person name="Liu B."/>
            <person name="Lei M."/>
            <person name="Yu H."/>
            <person name="Li Y."/>
            <person name="Xu H."/>
            <person name="Wei S."/>
            <person name="He X."/>
            <person name="Fang L."/>
            <person name="Zhang Z."/>
            <person name="Zhang Y."/>
            <person name="Huang X."/>
            <person name="Su Z."/>
            <person name="Tong W."/>
            <person name="Li J."/>
            <person name="Tong Z."/>
            <person name="Li S."/>
            <person name="Ye J."/>
            <person name="Wang L."/>
            <person name="Fang L."/>
            <person name="Lei T."/>
            <person name="Chen C.-S."/>
            <person name="Chen H.-C."/>
            <person name="Xu Z."/>
            <person name="Li H."/>
            <person name="Huang H."/>
            <person name="Zhang F."/>
            <person name="Xu H."/>
            <person name="Li N."/>
            <person name="Zhao C."/>
            <person name="Li S."/>
            <person name="Dong L."/>
            <person name="Huang Y."/>
            <person name="Li L."/>
            <person name="Xi Y."/>
            <person name="Qi Q."/>
            <person name="Li W."/>
            <person name="Zhang B."/>
            <person name="Hu W."/>
            <person name="Zhang Y."/>
            <person name="Tian X."/>
            <person name="Jiao Y."/>
            <person name="Liang X."/>
            <person name="Jin J."/>
            <person name="Gao L."/>
            <person name="Zheng W."/>
            <person name="Hao B."/>
            <person name="Liu S.-M."/>
            <person name="Wang W."/>
            <person name="Yuan L."/>
            <person name="Cao M."/>
            <person name="McDermott J."/>
            <person name="Samudrala R."/>
            <person name="Wang J."/>
            <person name="Wong G.K.-S."/>
            <person name="Yang H."/>
        </authorList>
    </citation>
    <scope>NUCLEOTIDE SEQUENCE [LARGE SCALE GENOMIC DNA]</scope>
    <source>
        <strain>cv. Nipponbare</strain>
    </source>
</reference>
<reference key="5">
    <citation type="journal article" date="2003" name="Science">
        <title>Collection, mapping, and annotation of over 28,000 cDNA clones from japonica rice.</title>
        <authorList>
            <consortium name="The rice full-length cDNA consortium"/>
        </authorList>
    </citation>
    <scope>NUCLEOTIDE SEQUENCE [LARGE SCALE MRNA]</scope>
    <source>
        <strain>cv. Nipponbare</strain>
    </source>
</reference>
<reference key="6">
    <citation type="journal article" date="2008" name="FEBS J.">
        <title>Identification of rice TUBBY-like genes and their evolution.</title>
        <authorList>
            <person name="Liu Q."/>
        </authorList>
    </citation>
    <scope>GENE FAMILY</scope>
    <scope>NOMENCLATURE</scope>
</reference>
<reference key="7">
    <citation type="journal article" date="2008" name="Genomics">
        <title>Genomewide comparative phylogenetic and molecular evolutionary analysis of tubby-like protein family in Arabidopsis, rice, and poplar.</title>
        <authorList>
            <person name="Yang Z."/>
            <person name="Zhou Y."/>
            <person name="Wang X."/>
            <person name="Gu S."/>
            <person name="Yu J."/>
            <person name="Liang G."/>
            <person name="Yan C."/>
            <person name="Xu C."/>
        </authorList>
    </citation>
    <scope>TISSUE SPECIFICITY</scope>
    <scope>GENE FAMILY</scope>
    <scope>NOMENCLATURE</scope>
</reference>
<name>TLP5_ORYSJ</name>
<evidence type="ECO:0000256" key="1">
    <source>
        <dbReference type="SAM" id="MobiDB-lite"/>
    </source>
</evidence>
<evidence type="ECO:0000269" key="2">
    <source>
    </source>
</evidence>
<evidence type="ECO:0000305" key="3"/>
<feature type="chain" id="PRO_0000351124" description="Tubby-like F-box protein 5">
    <location>
        <begin position="1"/>
        <end position="428"/>
    </location>
</feature>
<feature type="domain" description="F-box">
    <location>
        <begin position="65"/>
        <end position="117"/>
    </location>
</feature>
<feature type="region of interest" description="Disordered" evidence="1">
    <location>
        <begin position="17"/>
        <end position="65"/>
    </location>
</feature>
<feature type="compositionally biased region" description="Low complexity" evidence="1">
    <location>
        <begin position="47"/>
        <end position="65"/>
    </location>
</feature>